<organism>
    <name type="scientific">Xylella fastidiosa (strain Temecula1 / ATCC 700964)</name>
    <dbReference type="NCBI Taxonomy" id="183190"/>
    <lineage>
        <taxon>Bacteria</taxon>
        <taxon>Pseudomonadati</taxon>
        <taxon>Pseudomonadota</taxon>
        <taxon>Gammaproteobacteria</taxon>
        <taxon>Lysobacterales</taxon>
        <taxon>Lysobacteraceae</taxon>
        <taxon>Xylella</taxon>
    </lineage>
</organism>
<accession>Q87EA3</accession>
<dbReference type="EC" id="3.6.1.9" evidence="1"/>
<dbReference type="EMBL" id="AE009442">
    <property type="protein sequence ID" value="AAO28294.1"/>
    <property type="status" value="ALT_INIT"/>
    <property type="molecule type" value="Genomic_DNA"/>
</dbReference>
<dbReference type="RefSeq" id="WP_004090041.1">
    <property type="nucleotide sequence ID" value="NC_004556.1"/>
</dbReference>
<dbReference type="SMR" id="Q87EA3"/>
<dbReference type="KEGG" id="xft:PD_0415"/>
<dbReference type="HOGENOM" id="CLU_040416_2_1_6"/>
<dbReference type="Proteomes" id="UP000002516">
    <property type="component" value="Chromosome"/>
</dbReference>
<dbReference type="GO" id="GO:0005737">
    <property type="term" value="C:cytoplasm"/>
    <property type="evidence" value="ECO:0007669"/>
    <property type="project" value="UniProtKB-SubCell"/>
</dbReference>
<dbReference type="GO" id="GO:0047429">
    <property type="term" value="F:nucleoside triphosphate diphosphatase activity"/>
    <property type="evidence" value="ECO:0007669"/>
    <property type="project" value="UniProtKB-EC"/>
</dbReference>
<dbReference type="GO" id="GO:0009117">
    <property type="term" value="P:nucleotide metabolic process"/>
    <property type="evidence" value="ECO:0007669"/>
    <property type="project" value="UniProtKB-KW"/>
</dbReference>
<dbReference type="CDD" id="cd00555">
    <property type="entry name" value="Maf"/>
    <property type="match status" value="1"/>
</dbReference>
<dbReference type="Gene3D" id="3.90.950.10">
    <property type="match status" value="1"/>
</dbReference>
<dbReference type="HAMAP" id="MF_00528">
    <property type="entry name" value="Maf"/>
    <property type="match status" value="1"/>
</dbReference>
<dbReference type="InterPro" id="IPR029001">
    <property type="entry name" value="ITPase-like_fam"/>
</dbReference>
<dbReference type="InterPro" id="IPR003697">
    <property type="entry name" value="Maf-like"/>
</dbReference>
<dbReference type="NCBIfam" id="TIGR00172">
    <property type="entry name" value="maf"/>
    <property type="match status" value="1"/>
</dbReference>
<dbReference type="NCBIfam" id="NF003403">
    <property type="entry name" value="PRK04694.1"/>
    <property type="match status" value="1"/>
</dbReference>
<dbReference type="PANTHER" id="PTHR43213">
    <property type="entry name" value="BIFUNCTIONAL DTTP/UTP PYROPHOSPHATASE/METHYLTRANSFERASE PROTEIN-RELATED"/>
    <property type="match status" value="1"/>
</dbReference>
<dbReference type="PANTHER" id="PTHR43213:SF5">
    <property type="entry name" value="BIFUNCTIONAL DTTP_UTP PYROPHOSPHATASE_METHYLTRANSFERASE PROTEIN-RELATED"/>
    <property type="match status" value="1"/>
</dbReference>
<dbReference type="Pfam" id="PF02545">
    <property type="entry name" value="Maf"/>
    <property type="match status" value="1"/>
</dbReference>
<dbReference type="PIRSF" id="PIRSF006305">
    <property type="entry name" value="Maf"/>
    <property type="match status" value="1"/>
</dbReference>
<dbReference type="SUPFAM" id="SSF52972">
    <property type="entry name" value="ITPase-like"/>
    <property type="match status" value="1"/>
</dbReference>
<name>NTPP_XYLFT</name>
<protein>
    <recommendedName>
        <fullName evidence="1">Nucleoside triphosphate pyrophosphatase</fullName>
        <ecNumber evidence="1">3.6.1.9</ecNumber>
    </recommendedName>
    <alternativeName>
        <fullName evidence="1">Nucleotide pyrophosphatase</fullName>
        <shortName evidence="1">Nucleotide PPase</shortName>
    </alternativeName>
</protein>
<sequence>MLYLASRSLCRRQLLQRLDIPFQVIDLEIPEVRREDELPQDYVRRVAQEKAQVGLARVGDAFAPKVLGADTEVVLDGRVFGKPVDLAEAATMLAALSGRTHQVMTAVSLVAAGGVAAQVLVVSEVSFALLSQGQIARYVDSGEPMGKAGAYAIQGRGECFVSRLVGSYSGVMGLPLQQTAQLLATFEES</sequence>
<feature type="chain" id="PRO_0000123081" description="Nucleoside triphosphate pyrophosphatase">
    <location>
        <begin position="1"/>
        <end position="189"/>
    </location>
</feature>
<feature type="active site" description="Proton acceptor" evidence="1">
    <location>
        <position position="70"/>
    </location>
</feature>
<reference key="1">
    <citation type="journal article" date="2003" name="J. Bacteriol.">
        <title>Comparative analyses of the complete genome sequences of Pierce's disease and citrus variegated chlorosis strains of Xylella fastidiosa.</title>
        <authorList>
            <person name="Van Sluys M.A."/>
            <person name="de Oliveira M.C."/>
            <person name="Monteiro-Vitorello C.B."/>
            <person name="Miyaki C.Y."/>
            <person name="Furlan L.R."/>
            <person name="Camargo L.E.A."/>
            <person name="da Silva A.C.R."/>
            <person name="Moon D.H."/>
            <person name="Takita M.A."/>
            <person name="Lemos E.G.M."/>
            <person name="Machado M.A."/>
            <person name="Ferro M.I.T."/>
            <person name="da Silva F.R."/>
            <person name="Goldman M.H.S."/>
            <person name="Goldman G.H."/>
            <person name="Lemos M.V.F."/>
            <person name="El-Dorry H."/>
            <person name="Tsai S.M."/>
            <person name="Carrer H."/>
            <person name="Carraro D.M."/>
            <person name="de Oliveira R.C."/>
            <person name="Nunes L.R."/>
            <person name="Siqueira W.J."/>
            <person name="Coutinho L.L."/>
            <person name="Kimura E.T."/>
            <person name="Ferro E.S."/>
            <person name="Harakava R."/>
            <person name="Kuramae E.E."/>
            <person name="Marino C.L."/>
            <person name="Giglioti E."/>
            <person name="Abreu I.L."/>
            <person name="Alves L.M.C."/>
            <person name="do Amaral A.M."/>
            <person name="Baia G.S."/>
            <person name="Blanco S.R."/>
            <person name="Brito M.S."/>
            <person name="Cannavan F.S."/>
            <person name="Celestino A.V."/>
            <person name="da Cunha A.F."/>
            <person name="Fenille R.C."/>
            <person name="Ferro J.A."/>
            <person name="Formighieri E.F."/>
            <person name="Kishi L.T."/>
            <person name="Leoni S.G."/>
            <person name="Oliveira A.R."/>
            <person name="Rosa V.E. Jr."/>
            <person name="Sassaki F.T."/>
            <person name="Sena J.A.D."/>
            <person name="de Souza A.A."/>
            <person name="Truffi D."/>
            <person name="Tsukumo F."/>
            <person name="Yanai G.M."/>
            <person name="Zaros L.G."/>
            <person name="Civerolo E.L."/>
            <person name="Simpson A.J.G."/>
            <person name="Almeida N.F. Jr."/>
            <person name="Setubal J.C."/>
            <person name="Kitajima J.P."/>
        </authorList>
    </citation>
    <scope>NUCLEOTIDE SEQUENCE [LARGE SCALE GENOMIC DNA]</scope>
    <source>
        <strain>Temecula1 / ATCC 700964</strain>
    </source>
</reference>
<comment type="function">
    <text evidence="1">Nucleoside triphosphate pyrophosphatase. May have a dual role in cell division arrest and in preventing the incorporation of modified nucleotides into cellular nucleic acids.</text>
</comment>
<comment type="catalytic activity">
    <reaction evidence="1">
        <text>a ribonucleoside 5'-triphosphate + H2O = a ribonucleoside 5'-phosphate + diphosphate + H(+)</text>
        <dbReference type="Rhea" id="RHEA:23996"/>
        <dbReference type="ChEBI" id="CHEBI:15377"/>
        <dbReference type="ChEBI" id="CHEBI:15378"/>
        <dbReference type="ChEBI" id="CHEBI:33019"/>
        <dbReference type="ChEBI" id="CHEBI:58043"/>
        <dbReference type="ChEBI" id="CHEBI:61557"/>
        <dbReference type="EC" id="3.6.1.9"/>
    </reaction>
</comment>
<comment type="catalytic activity">
    <reaction evidence="1">
        <text>a 2'-deoxyribonucleoside 5'-triphosphate + H2O = a 2'-deoxyribonucleoside 5'-phosphate + diphosphate + H(+)</text>
        <dbReference type="Rhea" id="RHEA:44644"/>
        <dbReference type="ChEBI" id="CHEBI:15377"/>
        <dbReference type="ChEBI" id="CHEBI:15378"/>
        <dbReference type="ChEBI" id="CHEBI:33019"/>
        <dbReference type="ChEBI" id="CHEBI:61560"/>
        <dbReference type="ChEBI" id="CHEBI:65317"/>
        <dbReference type="EC" id="3.6.1.9"/>
    </reaction>
</comment>
<comment type="cofactor">
    <cofactor evidence="1">
        <name>a divalent metal cation</name>
        <dbReference type="ChEBI" id="CHEBI:60240"/>
    </cofactor>
</comment>
<comment type="subcellular location">
    <subcellularLocation>
        <location evidence="1">Cytoplasm</location>
    </subcellularLocation>
</comment>
<comment type="similarity">
    <text evidence="1">Belongs to the Maf family.</text>
</comment>
<comment type="sequence caution" evidence="2">
    <conflict type="erroneous initiation">
        <sequence resource="EMBL-CDS" id="AAO28294"/>
    </conflict>
</comment>
<keyword id="KW-0963">Cytoplasm</keyword>
<keyword id="KW-0378">Hydrolase</keyword>
<keyword id="KW-0546">Nucleotide metabolism</keyword>
<keyword id="KW-1185">Reference proteome</keyword>
<gene>
    <name type="ordered locus">PD_0415</name>
</gene>
<evidence type="ECO:0000255" key="1">
    <source>
        <dbReference type="HAMAP-Rule" id="MF_00528"/>
    </source>
</evidence>
<evidence type="ECO:0000305" key="2"/>
<proteinExistence type="inferred from homology"/>